<comment type="function">
    <text evidence="1">Allows the formation of correctly charged Gln-tRNA(Gln) through the transamidation of misacylated Glu-tRNA(Gln) in organisms which lack glutaminyl-tRNA synthetase. The reaction takes place in the presence of glutamine and ATP through an activated gamma-phospho-Glu-tRNA(Gln).</text>
</comment>
<comment type="catalytic activity">
    <reaction evidence="1">
        <text>L-glutamyl-tRNA(Gln) + L-glutamine + ATP + H2O = L-glutaminyl-tRNA(Gln) + L-glutamate + ADP + phosphate + H(+)</text>
        <dbReference type="Rhea" id="RHEA:17521"/>
        <dbReference type="Rhea" id="RHEA-COMP:9681"/>
        <dbReference type="Rhea" id="RHEA-COMP:9684"/>
        <dbReference type="ChEBI" id="CHEBI:15377"/>
        <dbReference type="ChEBI" id="CHEBI:15378"/>
        <dbReference type="ChEBI" id="CHEBI:29985"/>
        <dbReference type="ChEBI" id="CHEBI:30616"/>
        <dbReference type="ChEBI" id="CHEBI:43474"/>
        <dbReference type="ChEBI" id="CHEBI:58359"/>
        <dbReference type="ChEBI" id="CHEBI:78520"/>
        <dbReference type="ChEBI" id="CHEBI:78521"/>
        <dbReference type="ChEBI" id="CHEBI:456216"/>
        <dbReference type="EC" id="6.3.5.7"/>
    </reaction>
</comment>
<comment type="subunit">
    <text evidence="1">Heterotrimer of A, B and C subunits.</text>
</comment>
<comment type="similarity">
    <text evidence="1">Belongs to the amidase family. GatA subfamily.</text>
</comment>
<protein>
    <recommendedName>
        <fullName evidence="1">Glutamyl-tRNA(Gln) amidotransferase subunit A</fullName>
        <shortName evidence="1">Glu-ADT subunit A</shortName>
        <ecNumber evidence="1">6.3.5.7</ecNumber>
    </recommendedName>
</protein>
<keyword id="KW-0067">ATP-binding</keyword>
<keyword id="KW-0436">Ligase</keyword>
<keyword id="KW-0547">Nucleotide-binding</keyword>
<keyword id="KW-0648">Protein biosynthesis</keyword>
<accession>Q050D1</accession>
<name>GATA_LEPBL</name>
<feature type="chain" id="PRO_1000015854" description="Glutamyl-tRNA(Gln) amidotransferase subunit A">
    <location>
        <begin position="1"/>
        <end position="485"/>
    </location>
</feature>
<feature type="active site" description="Charge relay system" evidence="1">
    <location>
        <position position="80"/>
    </location>
</feature>
<feature type="active site" description="Charge relay system" evidence="1">
    <location>
        <position position="155"/>
    </location>
</feature>
<feature type="active site" description="Acyl-ester intermediate" evidence="1">
    <location>
        <position position="179"/>
    </location>
</feature>
<sequence>MNEILRKSYAELKSSLSLGKISATELATACIERIKEVDGSVKAFLSLDEKRILDAASESDARRKSGNPLSEFDGMPIAIKDNICIRDSITSCASKILENYKSPFHATVIEKLIAKGFVLIPRANMDEFAMGSSTENSAFQTTRNPFDLERIPGGSSGGSAAAVAASMVPLALGSDTGGSVRQPASLCGLYGLKPTYGTVSRYGLVAYASSLDQIGPFSKELQGCIDLYSVISGKDERDSTSLNHPGFSAPWTPDFKGLKIGTIKMTSEIQPEVVKAYEKVLNQLKEKGATLVELDFSKFDFAIPIYYIIATAECSSNLSRFDGIRFGSRKDKTGKLEDLFVDSRTTGFGSEVKRRILLGTFSLSAGYYDAYYGTAQKARVLIRKEYDSFFSKVDFILQPTSPTTAFKVGEKTKDPIQMYKADIWTTSVNLAGIPAISVPMGTDEKGLPIGLQITAPHFQEGKLFGAAQAIGALEDLNIKFPENIG</sequence>
<evidence type="ECO:0000255" key="1">
    <source>
        <dbReference type="HAMAP-Rule" id="MF_00120"/>
    </source>
</evidence>
<organism>
    <name type="scientific">Leptospira borgpetersenii serovar Hardjo-bovis (strain L550)</name>
    <dbReference type="NCBI Taxonomy" id="355276"/>
    <lineage>
        <taxon>Bacteria</taxon>
        <taxon>Pseudomonadati</taxon>
        <taxon>Spirochaetota</taxon>
        <taxon>Spirochaetia</taxon>
        <taxon>Leptospirales</taxon>
        <taxon>Leptospiraceae</taxon>
        <taxon>Leptospira</taxon>
    </lineage>
</organism>
<reference key="1">
    <citation type="journal article" date="2006" name="Proc. Natl. Acad. Sci. U.S.A.">
        <title>Genome reduction in Leptospira borgpetersenii reflects limited transmission potential.</title>
        <authorList>
            <person name="Bulach D.M."/>
            <person name="Zuerner R.L."/>
            <person name="Wilson P."/>
            <person name="Seemann T."/>
            <person name="McGrath A."/>
            <person name="Cullen P.A."/>
            <person name="Davis J."/>
            <person name="Johnson M."/>
            <person name="Kuczek E."/>
            <person name="Alt D.P."/>
            <person name="Peterson-Burch B."/>
            <person name="Coppel R.L."/>
            <person name="Rood J.I."/>
            <person name="Davies J.K."/>
            <person name="Adler B."/>
        </authorList>
    </citation>
    <scope>NUCLEOTIDE SEQUENCE [LARGE SCALE GENOMIC DNA]</scope>
    <source>
        <strain>L550</strain>
    </source>
</reference>
<dbReference type="EC" id="6.3.5.7" evidence="1"/>
<dbReference type="EMBL" id="CP000348">
    <property type="protein sequence ID" value="ABJ79314.1"/>
    <property type="molecule type" value="Genomic_DNA"/>
</dbReference>
<dbReference type="RefSeq" id="WP_011670411.1">
    <property type="nucleotide sequence ID" value="NC_008508.1"/>
</dbReference>
<dbReference type="SMR" id="Q050D1"/>
<dbReference type="KEGG" id="lbl:LBL_1879"/>
<dbReference type="HOGENOM" id="CLU_009600_0_3_12"/>
<dbReference type="GO" id="GO:0030956">
    <property type="term" value="C:glutamyl-tRNA(Gln) amidotransferase complex"/>
    <property type="evidence" value="ECO:0007669"/>
    <property type="project" value="InterPro"/>
</dbReference>
<dbReference type="GO" id="GO:0005524">
    <property type="term" value="F:ATP binding"/>
    <property type="evidence" value="ECO:0007669"/>
    <property type="project" value="UniProtKB-KW"/>
</dbReference>
<dbReference type="GO" id="GO:0050567">
    <property type="term" value="F:glutaminyl-tRNA synthase (glutamine-hydrolyzing) activity"/>
    <property type="evidence" value="ECO:0007669"/>
    <property type="project" value="UniProtKB-UniRule"/>
</dbReference>
<dbReference type="GO" id="GO:0006412">
    <property type="term" value="P:translation"/>
    <property type="evidence" value="ECO:0007669"/>
    <property type="project" value="UniProtKB-UniRule"/>
</dbReference>
<dbReference type="Gene3D" id="3.90.1300.10">
    <property type="entry name" value="Amidase signature (AS) domain"/>
    <property type="match status" value="1"/>
</dbReference>
<dbReference type="HAMAP" id="MF_00120">
    <property type="entry name" value="GatA"/>
    <property type="match status" value="1"/>
</dbReference>
<dbReference type="InterPro" id="IPR000120">
    <property type="entry name" value="Amidase"/>
</dbReference>
<dbReference type="InterPro" id="IPR020556">
    <property type="entry name" value="Amidase_CS"/>
</dbReference>
<dbReference type="InterPro" id="IPR023631">
    <property type="entry name" value="Amidase_dom"/>
</dbReference>
<dbReference type="InterPro" id="IPR036928">
    <property type="entry name" value="AS_sf"/>
</dbReference>
<dbReference type="InterPro" id="IPR004412">
    <property type="entry name" value="GatA"/>
</dbReference>
<dbReference type="NCBIfam" id="TIGR00132">
    <property type="entry name" value="gatA"/>
    <property type="match status" value="1"/>
</dbReference>
<dbReference type="PANTHER" id="PTHR11895:SF151">
    <property type="entry name" value="GLUTAMYL-TRNA(GLN) AMIDOTRANSFERASE SUBUNIT A"/>
    <property type="match status" value="1"/>
</dbReference>
<dbReference type="PANTHER" id="PTHR11895">
    <property type="entry name" value="TRANSAMIDASE"/>
    <property type="match status" value="1"/>
</dbReference>
<dbReference type="Pfam" id="PF01425">
    <property type="entry name" value="Amidase"/>
    <property type="match status" value="1"/>
</dbReference>
<dbReference type="SUPFAM" id="SSF75304">
    <property type="entry name" value="Amidase signature (AS) enzymes"/>
    <property type="match status" value="1"/>
</dbReference>
<dbReference type="PROSITE" id="PS00571">
    <property type="entry name" value="AMIDASES"/>
    <property type="match status" value="1"/>
</dbReference>
<proteinExistence type="inferred from homology"/>
<gene>
    <name evidence="1" type="primary">gatA</name>
    <name type="ordered locus">LBL_1879</name>
</gene>